<comment type="function">
    <text evidence="4 5">Non-catalytic component of the RNA exosome complex which has 3'-&gt;5' exoribonuclease activity and participates in a multitude of cellular RNA processing and degradation events. In the nucleus, the RNA exosome complex is involved in proper maturation of stable RNA species such as rRNA, snRNA and snoRNA, in the elimination of RNA processing by-products and non-coding 'pervasive' transcripts, such as antisense RNA species and cryptic unstable transcripts (CUTs), and of mRNAs with processing defects, thereby limiting or excluding their export to the cytoplasm. In the cytoplasm, the RNA exosome complex is involved in general mRNA turnover and in RNA surveillance pathways, preventing translation of aberrant mRNAs. The catalytic inactive RNA exosome core complex of 9 subunits (Exo-9) is proposed to play a pivotal role in the binding and presentation of RNA for ribonucleolysis, and to serve as a scaffold for the association with catalytic subunits and accessory proteins or complexes. RRP42 is part of the hexameric ring of RNase PH domain-containing subunits proposed to form a central channel which threads RNA substrates for degradation.</text>
</comment>
<comment type="subunit">
    <text evidence="1 4 5">Component of the RNA exosome complex. Specifically part of the catalytically inactive RNA exosome core complex (Exo-9) which may associate with the catalytic subunits RRP6 and DIS3 in cytoplasmic- and nuclear-specific RNA exosome complex forms. Exo-9 is formed by a hexameric base ring of RNase PH domain-containing subunits and a cap ring consisting of CSL4, RRP4 and RRP40.</text>
</comment>
<comment type="interaction">
    <interactant intactId="EBI-1765">
        <id>Q12277</id>
    </interactant>
    <interactant intactId="EBI-1731">
        <id>P53859</id>
        <label>CSL4</label>
    </interactant>
    <organismsDiffer>false</organismsDiffer>
    <experiments>17</experiments>
</comment>
<comment type="interaction">
    <interactant intactId="EBI-1765">
        <id>Q12277</id>
    </interactant>
    <interactant intactId="EBI-1749">
        <id>P48240</id>
        <label>MTR3</label>
    </interactant>
    <organismsDiffer>false</organismsDiffer>
    <experiments>12</experiments>
</comment>
<comment type="interaction">
    <interactant intactId="EBI-1765">
        <id>Q12277</id>
    </interactant>
    <interactant intactId="EBI-1788">
        <id>P46948</id>
        <label>SKI6</label>
    </interactant>
    <organismsDiffer>false</organismsDiffer>
    <experiments>5</experiments>
</comment>
<comment type="subcellular location">
    <subcellularLocation>
        <location evidence="2">Cytoplasm</location>
    </subcellularLocation>
    <subcellularLocation>
        <location evidence="2">Nucleus</location>
        <location evidence="2">Nucleolus</location>
    </subcellularLocation>
</comment>
<comment type="miscellaneous">
    <text evidence="3">Present with 7110 molecules/cell in log phase SD medium.</text>
</comment>
<comment type="similarity">
    <text evidence="6">Belongs to the RNase PH family.</text>
</comment>
<gene>
    <name type="primary">RRP42</name>
    <name type="ordered locus">YDL111C</name>
</gene>
<sequence length="265" mass="29055">MSLSVAEKSYLYDSLASTPSIRPDGRLPHQFRPIEIFTDFLPSSNGSSRIIASDGSECIVSIKSKVVDHHVENELLQVDVDIAGQRDDALVVETITSLLNKVLKSGSGVDSSKLQLTKKYSFKIFVDVLVISSHSHPVSLISFAIYSALNSTYLPKLISAFDDLEVEELPTFHDYDMVKLDINPPLVFILAVVGNNMLLDPAANESEVANNGLIISWSNGKITSPIRSVALNDSNVKSFKPHLLKQGLAMVEKYAPDVVRSLENL</sequence>
<dbReference type="EMBL" id="X95644">
    <property type="protein sequence ID" value="CAA64901.1"/>
    <property type="molecule type" value="Genomic_DNA"/>
</dbReference>
<dbReference type="EMBL" id="Z74159">
    <property type="protein sequence ID" value="CAA98678.1"/>
    <property type="molecule type" value="Genomic_DNA"/>
</dbReference>
<dbReference type="EMBL" id="BK006938">
    <property type="protein sequence ID" value="DAA11749.1"/>
    <property type="molecule type" value="Genomic_DNA"/>
</dbReference>
<dbReference type="PIR" id="S67653">
    <property type="entry name" value="S67653"/>
</dbReference>
<dbReference type="RefSeq" id="NP_010172.1">
    <property type="nucleotide sequence ID" value="NM_001180170.1"/>
</dbReference>
<dbReference type="PDB" id="4IFD">
    <property type="method" value="X-ray"/>
    <property type="resolution" value="2.80 A"/>
    <property type="chains" value="E=1-265"/>
</dbReference>
<dbReference type="PDB" id="4OO1">
    <property type="method" value="X-ray"/>
    <property type="resolution" value="3.30 A"/>
    <property type="chains" value="E=1-265"/>
</dbReference>
<dbReference type="PDB" id="5C0W">
    <property type="method" value="X-ray"/>
    <property type="resolution" value="4.60 A"/>
    <property type="chains" value="E=1-265"/>
</dbReference>
<dbReference type="PDB" id="5C0X">
    <property type="method" value="X-ray"/>
    <property type="resolution" value="3.81 A"/>
    <property type="chains" value="E=1-265"/>
</dbReference>
<dbReference type="PDB" id="5G06">
    <property type="method" value="EM"/>
    <property type="resolution" value="4.20 A"/>
    <property type="chains" value="E=1-265"/>
</dbReference>
<dbReference type="PDB" id="5JEA">
    <property type="method" value="X-ray"/>
    <property type="resolution" value="2.65 A"/>
    <property type="chains" value="E=1-265"/>
</dbReference>
<dbReference type="PDB" id="5K36">
    <property type="method" value="X-ray"/>
    <property type="resolution" value="3.10 A"/>
    <property type="chains" value="E=1-265"/>
</dbReference>
<dbReference type="PDB" id="5OKZ">
    <property type="method" value="X-ray"/>
    <property type="resolution" value="3.20 A"/>
    <property type="chains" value="E/O/Y/i=1-265"/>
</dbReference>
<dbReference type="PDB" id="5VZJ">
    <property type="method" value="X-ray"/>
    <property type="resolution" value="3.30 A"/>
    <property type="chains" value="E=1-265"/>
</dbReference>
<dbReference type="PDB" id="6FSZ">
    <property type="method" value="EM"/>
    <property type="resolution" value="4.60 A"/>
    <property type="chains" value="EE=1-265"/>
</dbReference>
<dbReference type="PDB" id="6LQS">
    <property type="method" value="EM"/>
    <property type="resolution" value="3.80 A"/>
    <property type="chains" value="R2=1-265"/>
</dbReference>
<dbReference type="PDB" id="7AJT">
    <property type="method" value="EM"/>
    <property type="resolution" value="4.60 A"/>
    <property type="chains" value="EF=1-265"/>
</dbReference>
<dbReference type="PDB" id="7AJU">
    <property type="method" value="EM"/>
    <property type="resolution" value="3.80 A"/>
    <property type="chains" value="EF=1-265"/>
</dbReference>
<dbReference type="PDB" id="7D4I">
    <property type="method" value="EM"/>
    <property type="resolution" value="4.00 A"/>
    <property type="chains" value="R2=1-265"/>
</dbReference>
<dbReference type="PDB" id="8QCF">
    <property type="method" value="EM"/>
    <property type="resolution" value="2.55 A"/>
    <property type="chains" value="F=1-265"/>
</dbReference>
<dbReference type="PDBsum" id="4IFD"/>
<dbReference type="PDBsum" id="4OO1"/>
<dbReference type="PDBsum" id="5C0W"/>
<dbReference type="PDBsum" id="5C0X"/>
<dbReference type="PDBsum" id="5G06"/>
<dbReference type="PDBsum" id="5JEA"/>
<dbReference type="PDBsum" id="5K36"/>
<dbReference type="PDBsum" id="5OKZ"/>
<dbReference type="PDBsum" id="5VZJ"/>
<dbReference type="PDBsum" id="6FSZ"/>
<dbReference type="PDBsum" id="6LQS"/>
<dbReference type="PDBsum" id="7AJT"/>
<dbReference type="PDBsum" id="7AJU"/>
<dbReference type="PDBsum" id="7D4I"/>
<dbReference type="PDBsum" id="8QCF"/>
<dbReference type="EMDB" id="EMD-0952"/>
<dbReference type="EMDB" id="EMD-11807"/>
<dbReference type="EMDB" id="EMD-11808"/>
<dbReference type="EMDB" id="EMD-18329"/>
<dbReference type="EMDB" id="EMD-30574"/>
<dbReference type="EMDB" id="EMD-4301"/>
<dbReference type="SMR" id="Q12277"/>
<dbReference type="BioGRID" id="31951">
    <property type="interactions" value="249"/>
</dbReference>
<dbReference type="ComplexPortal" id="CPX-599">
    <property type="entry name" value="Nuclear/nucleolar exosome complex, DIS3-RRP6 variant"/>
</dbReference>
<dbReference type="ComplexPortal" id="CPX-603">
    <property type="entry name" value="Cytoplasmic exosome complex, DIS3 variant"/>
</dbReference>
<dbReference type="DIP" id="DIP-1463N"/>
<dbReference type="FunCoup" id="Q12277">
    <property type="interactions" value="208"/>
</dbReference>
<dbReference type="IntAct" id="Q12277">
    <property type="interactions" value="73"/>
</dbReference>
<dbReference type="MINT" id="Q12277"/>
<dbReference type="STRING" id="4932.YDL111C"/>
<dbReference type="GlyGen" id="Q12277">
    <property type="glycosylation" value="1 site"/>
</dbReference>
<dbReference type="iPTMnet" id="Q12277"/>
<dbReference type="PaxDb" id="4932-YDL111C"/>
<dbReference type="PeptideAtlas" id="Q12277"/>
<dbReference type="EnsemblFungi" id="YDL111C_mRNA">
    <property type="protein sequence ID" value="YDL111C"/>
    <property type="gene ID" value="YDL111C"/>
</dbReference>
<dbReference type="GeneID" id="851447"/>
<dbReference type="KEGG" id="sce:YDL111C"/>
<dbReference type="AGR" id="SGD:S000002269"/>
<dbReference type="SGD" id="S000002269">
    <property type="gene designation" value="RRP42"/>
</dbReference>
<dbReference type="VEuPathDB" id="FungiDB:YDL111C"/>
<dbReference type="eggNOG" id="KOG1612">
    <property type="taxonomic scope" value="Eukaryota"/>
</dbReference>
<dbReference type="GeneTree" id="ENSGT00950000183130"/>
<dbReference type="HOGENOM" id="CLU_046570_1_0_1"/>
<dbReference type="InParanoid" id="Q12277"/>
<dbReference type="OMA" id="INKRWHW"/>
<dbReference type="OrthoDB" id="272245at2759"/>
<dbReference type="BioCyc" id="YEAST:G3O-29512-MONOMER"/>
<dbReference type="Reactome" id="R-SCE-429958">
    <property type="pathway name" value="mRNA decay by 3' to 5' exoribonuclease"/>
</dbReference>
<dbReference type="Reactome" id="R-SCE-450385">
    <property type="pathway name" value="Butyrate Response Factor 1 (BRF1) binds and destabilizes mRNA"/>
</dbReference>
<dbReference type="Reactome" id="R-SCE-450513">
    <property type="pathway name" value="Tristetraprolin (TTP, ZFP36) binds and destabilizes mRNA"/>
</dbReference>
<dbReference type="Reactome" id="R-SCE-6791226">
    <property type="pathway name" value="Major pathway of rRNA processing in the nucleolus and cytosol"/>
</dbReference>
<dbReference type="BioGRID-ORCS" id="851447">
    <property type="hits" value="2 hits in 10 CRISPR screens"/>
</dbReference>
<dbReference type="EvolutionaryTrace" id="Q12277"/>
<dbReference type="PRO" id="PR:Q12277"/>
<dbReference type="Proteomes" id="UP000002311">
    <property type="component" value="Chromosome IV"/>
</dbReference>
<dbReference type="RNAct" id="Q12277">
    <property type="molecule type" value="protein"/>
</dbReference>
<dbReference type="GO" id="GO:0000177">
    <property type="term" value="C:cytoplasmic exosome (RNase complex)"/>
    <property type="evidence" value="ECO:0000314"/>
    <property type="project" value="SGD"/>
</dbReference>
<dbReference type="GO" id="GO:0000178">
    <property type="term" value="C:exosome (RNase complex)"/>
    <property type="evidence" value="ECO:0000353"/>
    <property type="project" value="ComplexPortal"/>
</dbReference>
<dbReference type="GO" id="GO:0000176">
    <property type="term" value="C:nuclear exosome (RNase complex)"/>
    <property type="evidence" value="ECO:0000314"/>
    <property type="project" value="SGD"/>
</dbReference>
<dbReference type="GO" id="GO:0005730">
    <property type="term" value="C:nucleolus"/>
    <property type="evidence" value="ECO:0000314"/>
    <property type="project" value="ComplexPortal"/>
</dbReference>
<dbReference type="GO" id="GO:0005634">
    <property type="term" value="C:nucleus"/>
    <property type="evidence" value="ECO:0000314"/>
    <property type="project" value="ComplexPortal"/>
</dbReference>
<dbReference type="GO" id="GO:0035925">
    <property type="term" value="F:mRNA 3'-UTR AU-rich region binding"/>
    <property type="evidence" value="ECO:0000318"/>
    <property type="project" value="GO_Central"/>
</dbReference>
<dbReference type="GO" id="GO:0000467">
    <property type="term" value="P:exonucleolytic trimming to generate mature 3'-end of 5.8S rRNA from tricistronic rRNA transcript (SSU-rRNA, 5.8S rRNA, LSU-rRNA)"/>
    <property type="evidence" value="ECO:0000315"/>
    <property type="project" value="SGD"/>
</dbReference>
<dbReference type="GO" id="GO:0071028">
    <property type="term" value="P:nuclear mRNA surveillance"/>
    <property type="evidence" value="ECO:0000318"/>
    <property type="project" value="GO_Central"/>
</dbReference>
<dbReference type="GO" id="GO:0071035">
    <property type="term" value="P:nuclear polyadenylation-dependent rRNA catabolic process"/>
    <property type="evidence" value="ECO:0000318"/>
    <property type="project" value="GO_Central"/>
</dbReference>
<dbReference type="GO" id="GO:0006401">
    <property type="term" value="P:RNA catabolic process"/>
    <property type="evidence" value="ECO:0000314"/>
    <property type="project" value="ComplexPortal"/>
</dbReference>
<dbReference type="GO" id="GO:0006396">
    <property type="term" value="P:RNA processing"/>
    <property type="evidence" value="ECO:0000314"/>
    <property type="project" value="ComplexPortal"/>
</dbReference>
<dbReference type="GO" id="GO:0016075">
    <property type="term" value="P:rRNA catabolic process"/>
    <property type="evidence" value="ECO:0000315"/>
    <property type="project" value="SGD"/>
</dbReference>
<dbReference type="GO" id="GO:0071038">
    <property type="term" value="P:TRAMP-dependent tRNA surveillance pathway"/>
    <property type="evidence" value="ECO:0000314"/>
    <property type="project" value="SGD"/>
</dbReference>
<dbReference type="GO" id="GO:0034473">
    <property type="term" value="P:U1 snRNA 3'-end processing"/>
    <property type="evidence" value="ECO:0000318"/>
    <property type="project" value="GO_Central"/>
</dbReference>
<dbReference type="GO" id="GO:0034475">
    <property type="term" value="P:U4 snRNA 3'-end processing"/>
    <property type="evidence" value="ECO:0000318"/>
    <property type="project" value="GO_Central"/>
</dbReference>
<dbReference type="GO" id="GO:0034476">
    <property type="term" value="P:U5 snRNA 3'-end processing"/>
    <property type="evidence" value="ECO:0000318"/>
    <property type="project" value="GO_Central"/>
</dbReference>
<dbReference type="CDD" id="cd11367">
    <property type="entry name" value="RNase_PH_RRP42"/>
    <property type="match status" value="1"/>
</dbReference>
<dbReference type="FunFam" id="3.30.230.70:FF:000030">
    <property type="entry name" value="Exosome complex component RRP42"/>
    <property type="match status" value="1"/>
</dbReference>
<dbReference type="Gene3D" id="3.30.230.70">
    <property type="entry name" value="GHMP Kinase, N-terminal domain"/>
    <property type="match status" value="1"/>
</dbReference>
<dbReference type="InterPro" id="IPR050590">
    <property type="entry name" value="Exosome_comp_Rrp42_subfam"/>
</dbReference>
<dbReference type="InterPro" id="IPR027408">
    <property type="entry name" value="PNPase/RNase_PH_dom_sf"/>
</dbReference>
<dbReference type="InterPro" id="IPR020568">
    <property type="entry name" value="Ribosomal_Su5_D2-typ_SF"/>
</dbReference>
<dbReference type="PANTHER" id="PTHR11097:SF8">
    <property type="entry name" value="EXOSOME COMPLEX COMPONENT RRP42"/>
    <property type="match status" value="1"/>
</dbReference>
<dbReference type="PANTHER" id="PTHR11097">
    <property type="entry name" value="EXOSOME COMPLEX EXONUCLEASE RIBOSOMAL RNA PROCESSING PROTEIN"/>
    <property type="match status" value="1"/>
</dbReference>
<dbReference type="SUPFAM" id="SSF54211">
    <property type="entry name" value="Ribosomal protein S5 domain 2-like"/>
    <property type="match status" value="1"/>
</dbReference>
<feature type="chain" id="PRO_0000139966" description="Exosome complex component RRP42">
    <location>
        <begin position="1"/>
        <end position="265"/>
    </location>
</feature>
<feature type="helix" evidence="9">
    <location>
        <begin position="5"/>
        <end position="16"/>
    </location>
</feature>
<feature type="strand" evidence="9">
    <location>
        <begin position="17"/>
        <end position="19"/>
    </location>
</feature>
<feature type="strand" evidence="9">
    <location>
        <begin position="34"/>
        <end position="39"/>
    </location>
</feature>
<feature type="strand" evidence="9">
    <location>
        <begin position="44"/>
        <end position="52"/>
    </location>
</feature>
<feature type="strand" evidence="8">
    <location>
        <begin position="53"/>
        <end position="55"/>
    </location>
</feature>
<feature type="strand" evidence="9">
    <location>
        <begin position="57"/>
        <end position="68"/>
    </location>
</feature>
<feature type="turn" evidence="9">
    <location>
        <begin position="69"/>
        <end position="71"/>
    </location>
</feature>
<feature type="strand" evidence="9">
    <location>
        <begin position="76"/>
        <end position="82"/>
    </location>
</feature>
<feature type="helix" evidence="9">
    <location>
        <begin position="90"/>
        <end position="102"/>
    </location>
</feature>
<feature type="turn" evidence="9">
    <location>
        <begin position="105"/>
        <end position="108"/>
    </location>
</feature>
<feature type="helix" evidence="9">
    <location>
        <begin position="111"/>
        <end position="114"/>
    </location>
</feature>
<feature type="strand" evidence="9">
    <location>
        <begin position="117"/>
        <end position="132"/>
    </location>
</feature>
<feature type="helix" evidence="9">
    <location>
        <begin position="138"/>
        <end position="149"/>
    </location>
</feature>
<feature type="strand" evidence="9">
    <location>
        <begin position="153"/>
        <end position="158"/>
    </location>
</feature>
<feature type="turn" evidence="7">
    <location>
        <begin position="163"/>
        <end position="166"/>
    </location>
</feature>
<feature type="strand" evidence="9">
    <location>
        <begin position="171"/>
        <end position="179"/>
    </location>
</feature>
<feature type="strand" evidence="9">
    <location>
        <begin position="186"/>
        <end position="193"/>
    </location>
</feature>
<feature type="strand" evidence="9">
    <location>
        <begin position="196"/>
        <end position="200"/>
    </location>
</feature>
<feature type="helix" evidence="9">
    <location>
        <begin position="203"/>
        <end position="208"/>
    </location>
</feature>
<feature type="strand" evidence="9">
    <location>
        <begin position="210"/>
        <end position="218"/>
    </location>
</feature>
<feature type="strand" evidence="9">
    <location>
        <begin position="226"/>
        <end position="228"/>
    </location>
</feature>
<feature type="strand" evidence="9">
    <location>
        <begin position="233"/>
        <end position="235"/>
    </location>
</feature>
<feature type="helix" evidence="9">
    <location>
        <begin position="241"/>
        <end position="253"/>
    </location>
</feature>
<feature type="helix" evidence="9">
    <location>
        <begin position="256"/>
        <end position="262"/>
    </location>
</feature>
<reference key="1">
    <citation type="journal article" date="1996" name="Yeast">
        <title>The sequence of a 16,691 bp segment of Saccharomyces cerevisiae chromosome IV identifies the DUN1, PMT1, PMT5, SRP14 and DPR1 genes, and five new open reading frames.</title>
        <authorList>
            <person name="Boskovic J."/>
            <person name="Soler-Mira A."/>
            <person name="Garcia-Cantalejo J.M."/>
            <person name="Ballesta J.P.G."/>
            <person name="Jimenez A."/>
            <person name="Remacha M.A."/>
        </authorList>
    </citation>
    <scope>NUCLEOTIDE SEQUENCE [GENOMIC DNA]</scope>
    <source>
        <strain>ATCC 96604 / S288c / FY1679</strain>
    </source>
</reference>
<reference key="2">
    <citation type="journal article" date="1997" name="Nature">
        <title>The nucleotide sequence of Saccharomyces cerevisiae chromosome IV.</title>
        <authorList>
            <person name="Jacq C."/>
            <person name="Alt-Moerbe J."/>
            <person name="Andre B."/>
            <person name="Arnold W."/>
            <person name="Bahr A."/>
            <person name="Ballesta J.P.G."/>
            <person name="Bargues M."/>
            <person name="Baron L."/>
            <person name="Becker A."/>
            <person name="Biteau N."/>
            <person name="Bloecker H."/>
            <person name="Blugeon C."/>
            <person name="Boskovic J."/>
            <person name="Brandt P."/>
            <person name="Brueckner M."/>
            <person name="Buitrago M.J."/>
            <person name="Coster F."/>
            <person name="Delaveau T."/>
            <person name="del Rey F."/>
            <person name="Dujon B."/>
            <person name="Eide L.G."/>
            <person name="Garcia-Cantalejo J.M."/>
            <person name="Goffeau A."/>
            <person name="Gomez-Peris A."/>
            <person name="Granotier C."/>
            <person name="Hanemann V."/>
            <person name="Hankeln T."/>
            <person name="Hoheisel J.D."/>
            <person name="Jaeger W."/>
            <person name="Jimenez A."/>
            <person name="Jonniaux J.-L."/>
            <person name="Kraemer C."/>
            <person name="Kuester H."/>
            <person name="Laamanen P."/>
            <person name="Legros Y."/>
            <person name="Louis E.J."/>
            <person name="Moeller-Rieker S."/>
            <person name="Monnet A."/>
            <person name="Moro M."/>
            <person name="Mueller-Auer S."/>
            <person name="Nussbaumer B."/>
            <person name="Paricio N."/>
            <person name="Paulin L."/>
            <person name="Perea J."/>
            <person name="Perez-Alonso M."/>
            <person name="Perez-Ortin J.E."/>
            <person name="Pohl T.M."/>
            <person name="Prydz H."/>
            <person name="Purnelle B."/>
            <person name="Rasmussen S.W."/>
            <person name="Remacha M.A."/>
            <person name="Revuelta J.L."/>
            <person name="Rieger M."/>
            <person name="Salom D."/>
            <person name="Saluz H.P."/>
            <person name="Saiz J.E."/>
            <person name="Saren A.-M."/>
            <person name="Schaefer M."/>
            <person name="Scharfe M."/>
            <person name="Schmidt E.R."/>
            <person name="Schneider C."/>
            <person name="Scholler P."/>
            <person name="Schwarz S."/>
            <person name="Soler-Mira A."/>
            <person name="Urrestarazu L.A."/>
            <person name="Verhasselt P."/>
            <person name="Vissers S."/>
            <person name="Voet M."/>
            <person name="Volckaert G."/>
            <person name="Wagner G."/>
            <person name="Wambutt R."/>
            <person name="Wedler E."/>
            <person name="Wedler H."/>
            <person name="Woelfl S."/>
            <person name="Harris D.E."/>
            <person name="Bowman S."/>
            <person name="Brown D."/>
            <person name="Churcher C.M."/>
            <person name="Connor R."/>
            <person name="Dedman K."/>
            <person name="Gentles S."/>
            <person name="Hamlin N."/>
            <person name="Hunt S."/>
            <person name="Jones L."/>
            <person name="McDonald S."/>
            <person name="Murphy L.D."/>
            <person name="Niblett D."/>
            <person name="Odell C."/>
            <person name="Oliver K."/>
            <person name="Rajandream M.A."/>
            <person name="Richards C."/>
            <person name="Shore L."/>
            <person name="Walsh S.V."/>
            <person name="Barrell B.G."/>
            <person name="Dietrich F.S."/>
            <person name="Mulligan J.T."/>
            <person name="Allen E."/>
            <person name="Araujo R."/>
            <person name="Aviles E."/>
            <person name="Berno A."/>
            <person name="Carpenter J."/>
            <person name="Chen E."/>
            <person name="Cherry J.M."/>
            <person name="Chung E."/>
            <person name="Duncan M."/>
            <person name="Hunicke-Smith S."/>
            <person name="Hyman R.W."/>
            <person name="Komp C."/>
            <person name="Lashkari D."/>
            <person name="Lew H."/>
            <person name="Lin D."/>
            <person name="Mosedale D."/>
            <person name="Nakahara K."/>
            <person name="Namath A."/>
            <person name="Oefner P."/>
            <person name="Oh C."/>
            <person name="Petel F.X."/>
            <person name="Roberts D."/>
            <person name="Schramm S."/>
            <person name="Schroeder M."/>
            <person name="Shogren T."/>
            <person name="Shroff N."/>
            <person name="Winant A."/>
            <person name="Yelton M.A."/>
            <person name="Botstein D."/>
            <person name="Davis R.W."/>
            <person name="Johnston M."/>
            <person name="Andrews S."/>
            <person name="Brinkman R."/>
            <person name="Cooper J."/>
            <person name="Ding H."/>
            <person name="Du Z."/>
            <person name="Favello A."/>
            <person name="Fulton L."/>
            <person name="Gattung S."/>
            <person name="Greco T."/>
            <person name="Hallsworth K."/>
            <person name="Hawkins J."/>
            <person name="Hillier L.W."/>
            <person name="Jier M."/>
            <person name="Johnson D."/>
            <person name="Johnston L."/>
            <person name="Kirsten J."/>
            <person name="Kucaba T."/>
            <person name="Langston Y."/>
            <person name="Latreille P."/>
            <person name="Le T."/>
            <person name="Mardis E."/>
            <person name="Menezes S."/>
            <person name="Miller N."/>
            <person name="Nhan M."/>
            <person name="Pauley A."/>
            <person name="Peluso D."/>
            <person name="Rifkin L."/>
            <person name="Riles L."/>
            <person name="Taich A."/>
            <person name="Trevaskis E."/>
            <person name="Vignati D."/>
            <person name="Wilcox L."/>
            <person name="Wohldman P."/>
            <person name="Vaudin M."/>
            <person name="Wilson R."/>
            <person name="Waterston R."/>
            <person name="Albermann K."/>
            <person name="Hani J."/>
            <person name="Heumann K."/>
            <person name="Kleine K."/>
            <person name="Mewes H.-W."/>
            <person name="Zollner A."/>
            <person name="Zaccaria P."/>
        </authorList>
    </citation>
    <scope>NUCLEOTIDE SEQUENCE [LARGE SCALE GENOMIC DNA]</scope>
    <source>
        <strain>ATCC 204508 / S288c</strain>
    </source>
</reference>
<reference key="3">
    <citation type="journal article" date="2014" name="G3 (Bethesda)">
        <title>The reference genome sequence of Saccharomyces cerevisiae: Then and now.</title>
        <authorList>
            <person name="Engel S.R."/>
            <person name="Dietrich F.S."/>
            <person name="Fisk D.G."/>
            <person name="Binkley G."/>
            <person name="Balakrishnan R."/>
            <person name="Costanzo M.C."/>
            <person name="Dwight S.S."/>
            <person name="Hitz B.C."/>
            <person name="Karra K."/>
            <person name="Nash R.S."/>
            <person name="Weng S."/>
            <person name="Wong E.D."/>
            <person name="Lloyd P."/>
            <person name="Skrzypek M.S."/>
            <person name="Miyasato S.R."/>
            <person name="Simison M."/>
            <person name="Cherry J.M."/>
        </authorList>
    </citation>
    <scope>GENOME REANNOTATION</scope>
    <source>
        <strain>ATCC 204508 / S288c</strain>
    </source>
</reference>
<reference key="4">
    <citation type="journal article" date="1997" name="Cell">
        <title>The exosome: a conserved eukaryotic RNA processing complex containing multiple 3'--&gt;5' exoribonucleases.</title>
        <authorList>
            <person name="Mitchell P."/>
            <person name="Petfalski E."/>
            <person name="Shevchenko A."/>
            <person name="Mann M."/>
            <person name="Tollervey D."/>
        </authorList>
    </citation>
    <scope>IDENTIFICATION BY MASS SPECTROMETRY</scope>
    <scope>FUNCTION</scope>
    <scope>SUBUNIT</scope>
</reference>
<reference key="5">
    <citation type="journal article" date="1999" name="Genes Dev.">
        <title>The yeast exosome and human PM-Scl are related complexes of 3'--&gt;5' exonucleases.</title>
        <authorList>
            <person name="Allmang C."/>
            <person name="Petfalski E."/>
            <person name="Podtelejnikov A."/>
            <person name="Mann M."/>
            <person name="Tollervey D."/>
            <person name="Mitchell P."/>
        </authorList>
    </citation>
    <scope>IDENTIFICATION IN THE EXOSOME COMPLEX BY MASS SPECTROMETRY</scope>
</reference>
<reference key="6">
    <citation type="journal article" date="2003" name="Nature">
        <title>Global analysis of protein localization in budding yeast.</title>
        <authorList>
            <person name="Huh W.-K."/>
            <person name="Falvo J.V."/>
            <person name="Gerke L.C."/>
            <person name="Carroll A.S."/>
            <person name="Howson R.W."/>
            <person name="Weissman J.S."/>
            <person name="O'Shea E.K."/>
        </authorList>
    </citation>
    <scope>SUBCELLULAR LOCATION [LARGE SCALE ANALYSIS]</scope>
</reference>
<reference key="7">
    <citation type="journal article" date="2003" name="Nature">
        <title>Global analysis of protein expression in yeast.</title>
        <authorList>
            <person name="Ghaemmaghami S."/>
            <person name="Huh W.-K."/>
            <person name="Bower K."/>
            <person name="Howson R.W."/>
            <person name="Belle A."/>
            <person name="Dephoure N."/>
            <person name="O'Shea E.K."/>
            <person name="Weissman J.S."/>
        </authorList>
    </citation>
    <scope>LEVEL OF PROTEIN EXPRESSION [LARGE SCALE ANALYSIS]</scope>
</reference>
<reference key="8">
    <citation type="journal article" date="2006" name="Cell">
        <title>Reconstitution, activities, and structure of the eukaryotic RNA exosome.</title>
        <authorList>
            <person name="Liu Q."/>
            <person name="Greimann J.C."/>
            <person name="Lima C.D."/>
        </authorList>
    </citation>
    <scope>RECONSTITUTION OF THE RNA EXOSOME COMPLEX</scope>
    <scope>LACK OF EXONUCLEASE ACTIVITY</scope>
</reference>
<reference key="9">
    <citation type="journal article" date="2007" name="Cell">
        <authorList>
            <person name="Liu Q."/>
            <person name="Greimann J.C."/>
            <person name="Lima C.D."/>
        </authorList>
    </citation>
    <scope>ERRATUM OF PUBMED:17174896</scope>
</reference>
<reference key="10">
    <citation type="journal article" date="2007" name="Nat. Struct. Mol. Biol.">
        <title>A single subunit, Dis3, is essentially responsible for yeast exosome core activity.</title>
        <authorList>
            <person name="Dziembowski A."/>
            <person name="Lorentzen E."/>
            <person name="Conti E."/>
            <person name="Seraphin B."/>
        </authorList>
    </citation>
    <scope>IDENTIFICATION BY MASS SPECTROMETRY</scope>
    <scope>FUNCTION OF THE RNA EXOSOME COMPLEX</scope>
    <scope>SUBUNIT</scope>
</reference>
<organism>
    <name type="scientific">Saccharomyces cerevisiae (strain ATCC 204508 / S288c)</name>
    <name type="common">Baker's yeast</name>
    <dbReference type="NCBI Taxonomy" id="559292"/>
    <lineage>
        <taxon>Eukaryota</taxon>
        <taxon>Fungi</taxon>
        <taxon>Dikarya</taxon>
        <taxon>Ascomycota</taxon>
        <taxon>Saccharomycotina</taxon>
        <taxon>Saccharomycetes</taxon>
        <taxon>Saccharomycetales</taxon>
        <taxon>Saccharomycetaceae</taxon>
        <taxon>Saccharomyces</taxon>
    </lineage>
</organism>
<accession>Q12277</accession>
<accession>D6VRN9</accession>
<name>RRP42_YEAST</name>
<evidence type="ECO:0000269" key="1">
    <source>
    </source>
</evidence>
<evidence type="ECO:0000269" key="2">
    <source>
    </source>
</evidence>
<evidence type="ECO:0000269" key="3">
    <source>
    </source>
</evidence>
<evidence type="ECO:0000269" key="4">
    <source>
    </source>
</evidence>
<evidence type="ECO:0000269" key="5">
    <source>
    </source>
</evidence>
<evidence type="ECO:0000305" key="6"/>
<evidence type="ECO:0007829" key="7">
    <source>
        <dbReference type="PDB" id="4IFD"/>
    </source>
</evidence>
<evidence type="ECO:0007829" key="8">
    <source>
        <dbReference type="PDB" id="4OO1"/>
    </source>
</evidence>
<evidence type="ECO:0007829" key="9">
    <source>
        <dbReference type="PDB" id="5JEA"/>
    </source>
</evidence>
<keyword id="KW-0002">3D-structure</keyword>
<keyword id="KW-0963">Cytoplasm</keyword>
<keyword id="KW-0271">Exosome</keyword>
<keyword id="KW-0539">Nucleus</keyword>
<keyword id="KW-1185">Reference proteome</keyword>
<keyword id="KW-0694">RNA-binding</keyword>
<keyword id="KW-0698">rRNA processing</keyword>
<protein>
    <recommendedName>
        <fullName>Exosome complex component RRP42</fullName>
    </recommendedName>
    <alternativeName>
        <fullName>Ribosomal RNA-processing protein 42</fullName>
    </alternativeName>
</protein>
<proteinExistence type="evidence at protein level"/>